<name>VATE_CITLI</name>
<evidence type="ECO:0000305" key="1"/>
<proteinExistence type="evidence at transcript level"/>
<gene>
    <name type="primary">VATE</name>
</gene>
<accession>Q9SWE7</accession>
<dbReference type="EMBL" id="AF165939">
    <property type="protein sequence ID" value="AAD49706.1"/>
    <property type="molecule type" value="mRNA"/>
</dbReference>
<dbReference type="SMR" id="Q9SWE7"/>
<dbReference type="GO" id="GO:0033178">
    <property type="term" value="C:proton-transporting two-sector ATPase complex, catalytic domain"/>
    <property type="evidence" value="ECO:0007669"/>
    <property type="project" value="InterPro"/>
</dbReference>
<dbReference type="GO" id="GO:0046961">
    <property type="term" value="F:proton-transporting ATPase activity, rotational mechanism"/>
    <property type="evidence" value="ECO:0007669"/>
    <property type="project" value="InterPro"/>
</dbReference>
<dbReference type="Gene3D" id="6.10.250.1620">
    <property type="match status" value="1"/>
</dbReference>
<dbReference type="Gene3D" id="3.30.2320.30">
    <property type="entry name" value="ATP synthase, E subunit, C-terminal"/>
    <property type="match status" value="1"/>
</dbReference>
<dbReference type="HAMAP" id="MF_00311">
    <property type="entry name" value="ATP_synth_E_arch"/>
    <property type="match status" value="1"/>
</dbReference>
<dbReference type="InterPro" id="IPR038495">
    <property type="entry name" value="ATPase_E_C"/>
</dbReference>
<dbReference type="InterPro" id="IPR002842">
    <property type="entry name" value="ATPase_V1_Esu"/>
</dbReference>
<dbReference type="PANTHER" id="PTHR45715">
    <property type="entry name" value="ATPASE H+-TRANSPORTING V1 SUBUNIT E1A-RELATED"/>
    <property type="match status" value="1"/>
</dbReference>
<dbReference type="Pfam" id="PF01991">
    <property type="entry name" value="vATP-synt_E"/>
    <property type="match status" value="1"/>
</dbReference>
<dbReference type="SUPFAM" id="SSF160527">
    <property type="entry name" value="V-type ATPase subunit E-like"/>
    <property type="match status" value="1"/>
</dbReference>
<organism>
    <name type="scientific">Citrus limon</name>
    <name type="common">Lemon</name>
    <name type="synonym">Citrus medica var. limon</name>
    <dbReference type="NCBI Taxonomy" id="2708"/>
    <lineage>
        <taxon>Eukaryota</taxon>
        <taxon>Viridiplantae</taxon>
        <taxon>Streptophyta</taxon>
        <taxon>Embryophyta</taxon>
        <taxon>Tracheophyta</taxon>
        <taxon>Spermatophyta</taxon>
        <taxon>Magnoliopsida</taxon>
        <taxon>eudicotyledons</taxon>
        <taxon>Gunneridae</taxon>
        <taxon>Pentapetalae</taxon>
        <taxon>rosids</taxon>
        <taxon>malvids</taxon>
        <taxon>Sapindales</taxon>
        <taxon>Rutaceae</taxon>
        <taxon>Aurantioideae</taxon>
        <taxon>Citrus</taxon>
    </lineage>
</organism>
<feature type="chain" id="PRO_0000117302" description="V-type proton ATPase subunit E">
    <location>
        <begin position="1"/>
        <end position="230"/>
    </location>
</feature>
<reference key="1">
    <citation type="online journal article" date="2000" name="Plant Gene Register">
        <title>Isolation of vacuolar H+-ATPase subunit E cDNA from juice sacs of Citrus limon.</title>
        <authorList>
            <person name="Reuveni M."/>
            <person name="Sadka A."/>
        </authorList>
        <locator>PGR00-005</locator>
    </citation>
    <scope>NUCLEOTIDE SEQUENCE [MRNA]</scope>
    <source>
        <tissue>Fruit</tissue>
    </source>
</reference>
<protein>
    <recommendedName>
        <fullName>V-type proton ATPase subunit E</fullName>
        <shortName>V-ATPase subunit E</shortName>
    </recommendedName>
    <alternativeName>
        <fullName>ClVE-1</fullName>
    </alternativeName>
    <alternativeName>
        <fullName>Vacuolar proton pump subunit E</fullName>
    </alternativeName>
</protein>
<keyword id="KW-0375">Hydrogen ion transport</keyword>
<keyword id="KW-0406">Ion transport</keyword>
<keyword id="KW-0813">Transport</keyword>
<sequence length="230" mass="26343">MNDADVSKQIQQMVRFIRQEAEEKANEISVSAEEEFNIEKLQLVEAEKKKIRQEYERKEKQVEIRKKIEYSMQLNASRIKVLQAQDDLVSNMMEAASKEVLNVSRDHNSYKKLLKDLIVQSLLRLKEPAVLLRCRKDDHHLVESVLESAKEEYAQKLQVHPPEIIVDHHIYLPPGPGHHNAHGPSCSGGVVVASRDGKIVCENTLDARLDVVFRKKLPEIRKQLVSQVAA</sequence>
<comment type="function">
    <text>Subunit of the peripheral V1 complex of vacuolar ATPase essential for assembly or catalytic function. V-ATPase is responsible for acidifying a variety of intracellular compartments in eukaryotic cells.</text>
</comment>
<comment type="subunit">
    <text>V-ATPase is a heteromultimeric enzyme composed of a peripheral catalytic V1 complex (components A to H) attached to an integral membrane V0 proton pore complex (components: a, c, c', c'' and d).</text>
</comment>
<comment type="similarity">
    <text evidence="1">Belongs to the V-ATPase E subunit family.</text>
</comment>